<gene>
    <name type="primary">RPL16</name>
    <name type="ordered locus">AtMg00080</name>
</gene>
<keyword id="KW-0002">3D-structure</keyword>
<keyword id="KW-0496">Mitochondrion</keyword>
<keyword id="KW-1185">Reference proteome</keyword>
<keyword id="KW-0687">Ribonucleoprotein</keyword>
<keyword id="KW-0689">Ribosomal protein</keyword>
<keyword id="KW-0691">RNA editing</keyword>
<comment type="subunit">
    <text evidence="5">Component of the mitochondrial ribosome large subunit.</text>
</comment>
<comment type="subcellular location">
    <subcellularLocation>
        <location evidence="4">Mitochondrion</location>
    </subcellularLocation>
</comment>
<comment type="RNA editing">
    <location>
        <position position="12" evidence="1 2 3"/>
    </location>
    <location>
        <position position="70" evidence="1 2 3"/>
    </location>
    <location>
        <position position="77" evidence="1 2"/>
    </location>
    <location>
        <position position="147" evidence="1 2 3"/>
    </location>
    <location>
        <position position="169" evidence="1 2 3"/>
    </location>
    <location>
        <position position="171" evidence="1 2 3"/>
    </location>
</comment>
<comment type="similarity">
    <text evidence="5">Belongs to the universal ribosomal protein uL16 family.</text>
</comment>
<feature type="chain" id="PRO_0000062321" description="Large ribosomal subunit protein uL16m">
    <location>
        <begin position="1"/>
        <end position="179"/>
    </location>
</feature>
<evidence type="ECO:0000269" key="1">
    <source>
    </source>
</evidence>
<evidence type="ECO:0000269" key="2">
    <source>
    </source>
</evidence>
<evidence type="ECO:0000269" key="3">
    <source>
    </source>
</evidence>
<evidence type="ECO:0000303" key="4">
    <source>
    </source>
</evidence>
<evidence type="ECO:0000305" key="5"/>
<accession>Q95747</accession>
<accession>A0A2P2CLF1</accession>
<accession>A7KNJ7</accession>
<proteinExistence type="evidence at protein level"/>
<name>RM16_ARATH</name>
<dbReference type="EMBL" id="Y08501">
    <property type="protein sequence ID" value="CAA69754.3"/>
    <property type="status" value="ALT_SEQ"/>
    <property type="molecule type" value="Genomic_DNA"/>
</dbReference>
<dbReference type="EMBL" id="BK010421">
    <property type="protein sequence ID" value="DAB41498.2"/>
    <property type="molecule type" value="Genomic_DNA"/>
</dbReference>
<dbReference type="EMBL" id="D82062">
    <property type="protein sequence ID" value="BAA11531.1"/>
    <property type="status" value="ALT_SEQ"/>
    <property type="molecule type" value="Genomic_DNA"/>
</dbReference>
<dbReference type="EMBL" id="EF488940">
    <property type="protein sequence ID" value="ABS50652.1"/>
    <property type="molecule type" value="mRNA"/>
</dbReference>
<dbReference type="EMBL" id="EF488941">
    <property type="protein sequence ID" value="ABS50653.1"/>
    <property type="molecule type" value="mRNA"/>
</dbReference>
<dbReference type="RefSeq" id="NP_085480.1">
    <property type="nucleotide sequence ID" value="NC_001284.2"/>
</dbReference>
<dbReference type="PDB" id="6XYW">
    <property type="method" value="EM"/>
    <property type="resolution" value="3.86 A"/>
    <property type="chains" value="Am=1-179"/>
</dbReference>
<dbReference type="PDBsum" id="6XYW"/>
<dbReference type="EMDB" id="EMD-10654"/>
<dbReference type="SMR" id="Q95747"/>
<dbReference type="FunCoup" id="Q95747">
    <property type="interactions" value="952"/>
</dbReference>
<dbReference type="IntAct" id="Q95747">
    <property type="interactions" value="1"/>
</dbReference>
<dbReference type="STRING" id="3702.Q95747"/>
<dbReference type="PaxDb" id="3702-ATMG00080.1"/>
<dbReference type="PeptideAtlas" id="Q95747"/>
<dbReference type="ProteomicsDB" id="195535"/>
<dbReference type="Araport" id="ATMG00080"/>
<dbReference type="TAIR" id="ATMG00080">
    <property type="gene designation" value="RPL16"/>
</dbReference>
<dbReference type="eggNOG" id="KOG3422">
    <property type="taxonomic scope" value="Eukaryota"/>
</dbReference>
<dbReference type="InParanoid" id="Q95747"/>
<dbReference type="PRO" id="PR:Q95747"/>
<dbReference type="Proteomes" id="UP000006548">
    <property type="component" value="Mitochondrion MT"/>
</dbReference>
<dbReference type="ExpressionAtlas" id="Q95747">
    <property type="expression patterns" value="baseline and differential"/>
</dbReference>
<dbReference type="GO" id="GO:0005762">
    <property type="term" value="C:mitochondrial large ribosomal subunit"/>
    <property type="evidence" value="ECO:0000318"/>
    <property type="project" value="GO_Central"/>
</dbReference>
<dbReference type="GO" id="GO:0019843">
    <property type="term" value="F:rRNA binding"/>
    <property type="evidence" value="ECO:0000318"/>
    <property type="project" value="GO_Central"/>
</dbReference>
<dbReference type="GO" id="GO:0003735">
    <property type="term" value="F:structural constituent of ribosome"/>
    <property type="evidence" value="ECO:0000318"/>
    <property type="project" value="GO_Central"/>
</dbReference>
<dbReference type="GO" id="GO:0032543">
    <property type="term" value="P:mitochondrial translation"/>
    <property type="evidence" value="ECO:0000318"/>
    <property type="project" value="GO_Central"/>
</dbReference>
<dbReference type="CDD" id="cd01433">
    <property type="entry name" value="Ribosomal_L16_L10e"/>
    <property type="match status" value="1"/>
</dbReference>
<dbReference type="FunFam" id="3.90.1170.10:FF:000007">
    <property type="entry name" value="Ribosomal protein L16"/>
    <property type="match status" value="1"/>
</dbReference>
<dbReference type="Gene3D" id="3.90.1170.10">
    <property type="entry name" value="Ribosomal protein L10e/L16"/>
    <property type="match status" value="1"/>
</dbReference>
<dbReference type="InterPro" id="IPR047873">
    <property type="entry name" value="Ribosomal_uL16"/>
</dbReference>
<dbReference type="InterPro" id="IPR000114">
    <property type="entry name" value="Ribosomal_uL16_bact-type"/>
</dbReference>
<dbReference type="InterPro" id="IPR020798">
    <property type="entry name" value="Ribosomal_uL16_CS"/>
</dbReference>
<dbReference type="InterPro" id="IPR016180">
    <property type="entry name" value="Ribosomal_uL16_dom"/>
</dbReference>
<dbReference type="InterPro" id="IPR036920">
    <property type="entry name" value="Ribosomal_uL16_sf"/>
</dbReference>
<dbReference type="NCBIfam" id="TIGR01164">
    <property type="entry name" value="rplP_bact"/>
    <property type="match status" value="1"/>
</dbReference>
<dbReference type="PANTHER" id="PTHR12220">
    <property type="entry name" value="50S/60S RIBOSOMAL PROTEIN L16"/>
    <property type="match status" value="1"/>
</dbReference>
<dbReference type="PANTHER" id="PTHR12220:SF24">
    <property type="entry name" value="LARGE RIBOSOMAL SUBUNIT PROTEIN UL16M"/>
    <property type="match status" value="1"/>
</dbReference>
<dbReference type="Pfam" id="PF00252">
    <property type="entry name" value="Ribosomal_L16"/>
    <property type="match status" value="1"/>
</dbReference>
<dbReference type="PRINTS" id="PR00060">
    <property type="entry name" value="RIBOSOMALL16"/>
</dbReference>
<dbReference type="SUPFAM" id="SSF54686">
    <property type="entry name" value="Ribosomal protein L16p/L10e"/>
    <property type="match status" value="1"/>
</dbReference>
<dbReference type="PROSITE" id="PS00586">
    <property type="entry name" value="RIBOSOMAL_L16_1"/>
    <property type="match status" value="1"/>
</dbReference>
<dbReference type="PROSITE" id="PS00701">
    <property type="entry name" value="RIBOSOMAL_L16_2"/>
    <property type="match status" value="1"/>
</dbReference>
<geneLocation type="mitochondrion"/>
<sequence length="179" mass="20147">MYLTIKSIMLLWKYLLVTESQVSKCGFHIVKKKGDVLYPKRTKYSKYRKGRCSRGCKPDGTKLGFGRYGIKSCKAGRLSYRAIEAARRAIIGHFHRAMSGQFRRNGKIWVRVFADLPITGKPTEVRMGRGKGNPTGWIARVSTGQILFEMDGVSLANARQAATLAAHKLCLSTKFVQWS</sequence>
<organism>
    <name type="scientific">Arabidopsis thaliana</name>
    <name type="common">Mouse-ear cress</name>
    <dbReference type="NCBI Taxonomy" id="3702"/>
    <lineage>
        <taxon>Eukaryota</taxon>
        <taxon>Viridiplantae</taxon>
        <taxon>Streptophyta</taxon>
        <taxon>Embryophyta</taxon>
        <taxon>Tracheophyta</taxon>
        <taxon>Spermatophyta</taxon>
        <taxon>Magnoliopsida</taxon>
        <taxon>eudicotyledons</taxon>
        <taxon>Gunneridae</taxon>
        <taxon>Pentapetalae</taxon>
        <taxon>rosids</taxon>
        <taxon>malvids</taxon>
        <taxon>Brassicales</taxon>
        <taxon>Brassicaceae</taxon>
        <taxon>Camelineae</taxon>
        <taxon>Arabidopsis</taxon>
    </lineage>
</organism>
<reference key="1">
    <citation type="journal article" date="1997" name="Nat. Genet.">
        <title>The mitochondrial genome of Arabidopsis thaliana contains 57 genes in 366,924 nucleotides.</title>
        <authorList>
            <person name="Unseld M."/>
            <person name="Marienfeld J.R."/>
            <person name="Brandt P."/>
            <person name="Brennicke A."/>
        </authorList>
    </citation>
    <scope>NUCLEOTIDE SEQUENCE [LARGE SCALE GENOMIC DNA]</scope>
    <source>
        <strain>cv. C24</strain>
    </source>
</reference>
<reference key="2">
    <citation type="journal article" date="1999" name="Proc. Natl. Acad. Sci. U.S.A.">
        <title>RNA editing in Arabidopsis mitochondria effects 441 C to U changes in ORFs.</title>
        <authorList>
            <person name="Giege P."/>
            <person name="Brennicke A."/>
        </authorList>
    </citation>
    <scope>NUCLEOTIDE SEQUENCE [GENOMIC DNA]</scope>
    <scope>RNA EDITING</scope>
</reference>
<reference key="3">
    <citation type="journal article" date="2018" name="Plant Cell">
        <title>Correction of persistent errors in Arabidopsis reference mitochondrial genomes.</title>
        <authorList>
            <person name="Sloan D.B."/>
            <person name="Wu Z."/>
            <person name="Sharbrough J."/>
        </authorList>
    </citation>
    <scope>NUCLEOTIDE SEQUENCE [LARGE SCALE GENOMIC DNA]</scope>
    <scope>RNA EDITING</scope>
    <source>
        <strain>cv. Columbia</strain>
    </source>
</reference>
<reference key="4">
    <citation type="journal article" date="1996" name="Plant Cell">
        <title>Altered mitochondrial gene expression in a maternal distorted leaf mutant of Arabidopsis induced by chloroplast mutator.</title>
        <authorList>
            <person name="Sakamoto W."/>
            <person name="Kondo H."/>
            <person name="Murata M."/>
            <person name="Motoyoshi F."/>
        </authorList>
    </citation>
    <scope>NUCLEOTIDE SEQUENCE [GENOMIC DNA] OF 9-179</scope>
    <source>
        <strain>cv. Landsberg erecta</strain>
    </source>
</reference>
<reference key="5">
    <citation type="journal article" date="2008" name="Genetics">
        <title>Genetic architecture of mitochondrial editing in Arabidopsis thaliana.</title>
        <authorList>
            <person name="Bentolila S."/>
            <person name="Elliott L.E."/>
            <person name="Hanson M.R."/>
        </authorList>
    </citation>
    <scope>NUCLEOTIDE SEQUENCE [MRNA] OF 20-173</scope>
    <scope>RNA EDITING</scope>
    <source>
        <strain>cv. Columbia</strain>
        <strain>cv. Landsberg erecta</strain>
        <tissue>Rosette leaf</tissue>
    </source>
</reference>
<reference key="6">
    <citation type="journal article" date="2023" name="Plant Cell">
        <title>An updated nomenclature for plant ribosomal protein genes.</title>
        <authorList>
            <person name="Scarpin M.R."/>
            <person name="Busche M."/>
            <person name="Martinez R.E."/>
            <person name="Harper L.C."/>
            <person name="Reiser L."/>
            <person name="Szakonyi D."/>
            <person name="Merchante C."/>
            <person name="Lan T."/>
            <person name="Xiong W."/>
            <person name="Mo B."/>
            <person name="Tang G."/>
            <person name="Chen X."/>
            <person name="Bailey-Serres J."/>
            <person name="Browning K.S."/>
            <person name="Brunkard J.O."/>
        </authorList>
    </citation>
    <scope>NOMENCLATURE</scope>
</reference>
<protein>
    <recommendedName>
        <fullName evidence="4">Large ribosomal subunit protein uL16m</fullName>
    </recommendedName>
    <alternativeName>
        <fullName>60S ribosomal protein L16, mitochondrial</fullName>
    </alternativeName>
</protein>